<feature type="chain" id="PRO_1000094577" description="3-dehydroquinate synthase">
    <location>
        <begin position="1"/>
        <end position="356"/>
    </location>
</feature>
<feature type="binding site" evidence="1">
    <location>
        <begin position="69"/>
        <end position="74"/>
    </location>
    <ligand>
        <name>NAD(+)</name>
        <dbReference type="ChEBI" id="CHEBI:57540"/>
    </ligand>
</feature>
<feature type="binding site" evidence="1">
    <location>
        <begin position="103"/>
        <end position="107"/>
    </location>
    <ligand>
        <name>NAD(+)</name>
        <dbReference type="ChEBI" id="CHEBI:57540"/>
    </ligand>
</feature>
<feature type="binding site" evidence="1">
    <location>
        <begin position="127"/>
        <end position="128"/>
    </location>
    <ligand>
        <name>NAD(+)</name>
        <dbReference type="ChEBI" id="CHEBI:57540"/>
    </ligand>
</feature>
<feature type="binding site" evidence="1">
    <location>
        <position position="140"/>
    </location>
    <ligand>
        <name>NAD(+)</name>
        <dbReference type="ChEBI" id="CHEBI:57540"/>
    </ligand>
</feature>
<feature type="binding site" evidence="1">
    <location>
        <position position="149"/>
    </location>
    <ligand>
        <name>NAD(+)</name>
        <dbReference type="ChEBI" id="CHEBI:57540"/>
    </ligand>
</feature>
<feature type="binding site" evidence="1">
    <location>
        <begin position="167"/>
        <end position="170"/>
    </location>
    <ligand>
        <name>NAD(+)</name>
        <dbReference type="ChEBI" id="CHEBI:57540"/>
    </ligand>
</feature>
<feature type="binding site" evidence="1">
    <location>
        <position position="182"/>
    </location>
    <ligand>
        <name>Zn(2+)</name>
        <dbReference type="ChEBI" id="CHEBI:29105"/>
    </ligand>
</feature>
<feature type="binding site" evidence="1">
    <location>
        <position position="245"/>
    </location>
    <ligand>
        <name>Zn(2+)</name>
        <dbReference type="ChEBI" id="CHEBI:29105"/>
    </ligand>
</feature>
<feature type="binding site" evidence="1">
    <location>
        <position position="262"/>
    </location>
    <ligand>
        <name>Zn(2+)</name>
        <dbReference type="ChEBI" id="CHEBI:29105"/>
    </ligand>
</feature>
<sequence length="356" mass="39048">MEKIVVALGKRSYPISIGEGLLTHAELFKSAIKGKRVMIVSNEIVAPLYLACCKETLIDFQIDEIILPDGEKFKNLHTFEIILTALLSNKHARDTTIIALGGGVIGDMAGFAAACYQRGVPFIQVPTTVLSQVDSSVGGKTAVNHPLGKNMIGAFYQPQSVIIDIDCLKTLPAREFSAGMAEVIKYGILYDQAFFIWLEENVTAIKTLQPAAITYMIKRCCEIKAEIVSLDEKEGGIRALLNLGHTFGHAIEAEQGYGNWLHGEAVASGMVLAAKTALNLGLIESAQIEQIILLIKQFDLPVNAPENMHYDQFFDHMQLDKKVLDGKLRLILPTSIGRCEIFDNVSETVLRSVIES</sequence>
<reference key="1">
    <citation type="journal article" date="2008" name="BMC Genomics">
        <title>Genomics of an extreme psychrophile, Psychromonas ingrahamii.</title>
        <authorList>
            <person name="Riley M."/>
            <person name="Staley J.T."/>
            <person name="Danchin A."/>
            <person name="Wang T.Z."/>
            <person name="Brettin T.S."/>
            <person name="Hauser L.J."/>
            <person name="Land M.L."/>
            <person name="Thompson L.S."/>
        </authorList>
    </citation>
    <scope>NUCLEOTIDE SEQUENCE [LARGE SCALE GENOMIC DNA]</scope>
    <source>
        <strain>DSM 17664 / CCUG 51855 / 37</strain>
    </source>
</reference>
<gene>
    <name evidence="1" type="primary">aroB</name>
    <name type="ordered locus">Ping_0164</name>
</gene>
<accession>A1SRB7</accession>
<evidence type="ECO:0000255" key="1">
    <source>
        <dbReference type="HAMAP-Rule" id="MF_00110"/>
    </source>
</evidence>
<proteinExistence type="inferred from homology"/>
<keyword id="KW-0028">Amino-acid biosynthesis</keyword>
<keyword id="KW-0057">Aromatic amino acid biosynthesis</keyword>
<keyword id="KW-0170">Cobalt</keyword>
<keyword id="KW-0963">Cytoplasm</keyword>
<keyword id="KW-0456">Lyase</keyword>
<keyword id="KW-0479">Metal-binding</keyword>
<keyword id="KW-0520">NAD</keyword>
<keyword id="KW-0547">Nucleotide-binding</keyword>
<keyword id="KW-1185">Reference proteome</keyword>
<keyword id="KW-0862">Zinc</keyword>
<organism>
    <name type="scientific">Psychromonas ingrahamii (strain DSM 17664 / CCUG 51855 / 37)</name>
    <dbReference type="NCBI Taxonomy" id="357804"/>
    <lineage>
        <taxon>Bacteria</taxon>
        <taxon>Pseudomonadati</taxon>
        <taxon>Pseudomonadota</taxon>
        <taxon>Gammaproteobacteria</taxon>
        <taxon>Alteromonadales</taxon>
        <taxon>Psychromonadaceae</taxon>
        <taxon>Psychromonas</taxon>
    </lineage>
</organism>
<comment type="function">
    <text evidence="1">Catalyzes the conversion of 3-deoxy-D-arabino-heptulosonate 7-phosphate (DAHP) to dehydroquinate (DHQ).</text>
</comment>
<comment type="catalytic activity">
    <reaction evidence="1">
        <text>7-phospho-2-dehydro-3-deoxy-D-arabino-heptonate = 3-dehydroquinate + phosphate</text>
        <dbReference type="Rhea" id="RHEA:21968"/>
        <dbReference type="ChEBI" id="CHEBI:32364"/>
        <dbReference type="ChEBI" id="CHEBI:43474"/>
        <dbReference type="ChEBI" id="CHEBI:58394"/>
        <dbReference type="EC" id="4.2.3.4"/>
    </reaction>
</comment>
<comment type="cofactor">
    <cofactor evidence="1">
        <name>Co(2+)</name>
        <dbReference type="ChEBI" id="CHEBI:48828"/>
    </cofactor>
    <cofactor evidence="1">
        <name>Zn(2+)</name>
        <dbReference type="ChEBI" id="CHEBI:29105"/>
    </cofactor>
    <text evidence="1">Binds 1 divalent metal cation per subunit. Can use either Co(2+) or Zn(2+).</text>
</comment>
<comment type="cofactor">
    <cofactor evidence="1">
        <name>NAD(+)</name>
        <dbReference type="ChEBI" id="CHEBI:57540"/>
    </cofactor>
</comment>
<comment type="pathway">
    <text evidence="1">Metabolic intermediate biosynthesis; chorismate biosynthesis; chorismate from D-erythrose 4-phosphate and phosphoenolpyruvate: step 2/7.</text>
</comment>
<comment type="subcellular location">
    <subcellularLocation>
        <location evidence="1">Cytoplasm</location>
    </subcellularLocation>
</comment>
<comment type="similarity">
    <text evidence="1">Belongs to the sugar phosphate cyclases superfamily. Dehydroquinate synthase family.</text>
</comment>
<dbReference type="EC" id="4.2.3.4" evidence="1"/>
<dbReference type="EMBL" id="CP000510">
    <property type="protein sequence ID" value="ABM02032.1"/>
    <property type="molecule type" value="Genomic_DNA"/>
</dbReference>
<dbReference type="RefSeq" id="WP_011768591.1">
    <property type="nucleotide sequence ID" value="NC_008709.1"/>
</dbReference>
<dbReference type="SMR" id="A1SRB7"/>
<dbReference type="STRING" id="357804.Ping_0164"/>
<dbReference type="KEGG" id="pin:Ping_0164"/>
<dbReference type="eggNOG" id="COG0337">
    <property type="taxonomic scope" value="Bacteria"/>
</dbReference>
<dbReference type="HOGENOM" id="CLU_001201_0_2_6"/>
<dbReference type="OrthoDB" id="9806583at2"/>
<dbReference type="UniPathway" id="UPA00053">
    <property type="reaction ID" value="UER00085"/>
</dbReference>
<dbReference type="Proteomes" id="UP000000639">
    <property type="component" value="Chromosome"/>
</dbReference>
<dbReference type="GO" id="GO:0005737">
    <property type="term" value="C:cytoplasm"/>
    <property type="evidence" value="ECO:0007669"/>
    <property type="project" value="UniProtKB-SubCell"/>
</dbReference>
<dbReference type="GO" id="GO:0003856">
    <property type="term" value="F:3-dehydroquinate synthase activity"/>
    <property type="evidence" value="ECO:0007669"/>
    <property type="project" value="UniProtKB-UniRule"/>
</dbReference>
<dbReference type="GO" id="GO:0046872">
    <property type="term" value="F:metal ion binding"/>
    <property type="evidence" value="ECO:0007669"/>
    <property type="project" value="UniProtKB-KW"/>
</dbReference>
<dbReference type="GO" id="GO:0000166">
    <property type="term" value="F:nucleotide binding"/>
    <property type="evidence" value="ECO:0007669"/>
    <property type="project" value="UniProtKB-KW"/>
</dbReference>
<dbReference type="GO" id="GO:0008652">
    <property type="term" value="P:amino acid biosynthetic process"/>
    <property type="evidence" value="ECO:0007669"/>
    <property type="project" value="UniProtKB-KW"/>
</dbReference>
<dbReference type="GO" id="GO:0009073">
    <property type="term" value="P:aromatic amino acid family biosynthetic process"/>
    <property type="evidence" value="ECO:0007669"/>
    <property type="project" value="UniProtKB-KW"/>
</dbReference>
<dbReference type="GO" id="GO:0009423">
    <property type="term" value="P:chorismate biosynthetic process"/>
    <property type="evidence" value="ECO:0007669"/>
    <property type="project" value="UniProtKB-UniRule"/>
</dbReference>
<dbReference type="CDD" id="cd08195">
    <property type="entry name" value="DHQS"/>
    <property type="match status" value="1"/>
</dbReference>
<dbReference type="FunFam" id="1.20.1090.10:FF:000002">
    <property type="entry name" value="3-dehydroquinate synthase"/>
    <property type="match status" value="1"/>
</dbReference>
<dbReference type="FunFam" id="3.40.50.1970:FF:000001">
    <property type="entry name" value="3-dehydroquinate synthase"/>
    <property type="match status" value="1"/>
</dbReference>
<dbReference type="Gene3D" id="3.40.50.1970">
    <property type="match status" value="1"/>
</dbReference>
<dbReference type="Gene3D" id="1.20.1090.10">
    <property type="entry name" value="Dehydroquinate synthase-like - alpha domain"/>
    <property type="match status" value="1"/>
</dbReference>
<dbReference type="HAMAP" id="MF_00110">
    <property type="entry name" value="DHQ_synthase"/>
    <property type="match status" value="1"/>
</dbReference>
<dbReference type="InterPro" id="IPR050071">
    <property type="entry name" value="Dehydroquinate_synthase"/>
</dbReference>
<dbReference type="InterPro" id="IPR016037">
    <property type="entry name" value="DHQ_synth_AroB"/>
</dbReference>
<dbReference type="InterPro" id="IPR030963">
    <property type="entry name" value="DHQ_synth_fam"/>
</dbReference>
<dbReference type="InterPro" id="IPR030960">
    <property type="entry name" value="DHQS/DOIS_N"/>
</dbReference>
<dbReference type="InterPro" id="IPR056179">
    <property type="entry name" value="DHQS_C"/>
</dbReference>
<dbReference type="NCBIfam" id="TIGR01357">
    <property type="entry name" value="aroB"/>
    <property type="match status" value="1"/>
</dbReference>
<dbReference type="PANTHER" id="PTHR43622">
    <property type="entry name" value="3-DEHYDROQUINATE SYNTHASE"/>
    <property type="match status" value="1"/>
</dbReference>
<dbReference type="PANTHER" id="PTHR43622:SF7">
    <property type="entry name" value="3-DEHYDROQUINATE SYNTHASE, CHLOROPLASTIC"/>
    <property type="match status" value="1"/>
</dbReference>
<dbReference type="Pfam" id="PF01761">
    <property type="entry name" value="DHQ_synthase"/>
    <property type="match status" value="1"/>
</dbReference>
<dbReference type="Pfam" id="PF24621">
    <property type="entry name" value="DHQS_C"/>
    <property type="match status" value="1"/>
</dbReference>
<dbReference type="PIRSF" id="PIRSF001455">
    <property type="entry name" value="DHQ_synth"/>
    <property type="match status" value="1"/>
</dbReference>
<dbReference type="SUPFAM" id="SSF56796">
    <property type="entry name" value="Dehydroquinate synthase-like"/>
    <property type="match status" value="1"/>
</dbReference>
<protein>
    <recommendedName>
        <fullName evidence="1">3-dehydroquinate synthase</fullName>
        <shortName evidence="1">DHQS</shortName>
        <ecNumber evidence="1">4.2.3.4</ecNumber>
    </recommendedName>
</protein>
<name>AROB_PSYIN</name>